<dbReference type="EMBL" id="AF092136">
    <property type="protein sequence ID" value="AAD40378.1"/>
    <property type="molecule type" value="mRNA"/>
</dbReference>
<dbReference type="EMBL" id="AK024688">
    <property type="protein sequence ID" value="BAB14963.1"/>
    <property type="molecule type" value="mRNA"/>
</dbReference>
<dbReference type="EMBL" id="CR457332">
    <property type="protein sequence ID" value="CAG33613.1"/>
    <property type="molecule type" value="mRNA"/>
</dbReference>
<dbReference type="EMBL" id="AP000580">
    <property type="status" value="NOT_ANNOTATED_CDS"/>
    <property type="molecule type" value="Genomic_DNA"/>
</dbReference>
<dbReference type="EMBL" id="AP002812">
    <property type="status" value="NOT_ANNOTATED_CDS"/>
    <property type="molecule type" value="Genomic_DNA"/>
</dbReference>
<dbReference type="EMBL" id="BC002752">
    <property type="protein sequence ID" value="AAH02752.1"/>
    <property type="molecule type" value="mRNA"/>
</dbReference>
<dbReference type="EMBL" id="BC016854">
    <property type="protein sequence ID" value="AAH16854.1"/>
    <property type="molecule type" value="mRNA"/>
</dbReference>
<dbReference type="CCDS" id="CCDS8254.1">
    <molecule id="Q9H7C9-1"/>
</dbReference>
<dbReference type="RefSeq" id="NP_001303886.1">
    <property type="nucleotide sequence ID" value="NM_001316957.1"/>
</dbReference>
<dbReference type="RefSeq" id="NP_001303889.1">
    <molecule id="Q9H7C9-1"/>
    <property type="nucleotide sequence ID" value="NM_001316960.2"/>
</dbReference>
<dbReference type="RefSeq" id="NP_001303890.1">
    <molecule id="Q9H7C9-1"/>
    <property type="nucleotide sequence ID" value="NM_001316961.2"/>
</dbReference>
<dbReference type="RefSeq" id="NP_001303891.1">
    <molecule id="Q9H7C9-1"/>
    <property type="nucleotide sequence ID" value="NM_001316962.2"/>
</dbReference>
<dbReference type="RefSeq" id="NP_001350493.2">
    <molecule id="Q9H7C9-1"/>
    <property type="nucleotide sequence ID" value="NM_001363564.2"/>
</dbReference>
<dbReference type="RefSeq" id="NP_001378964.1">
    <molecule id="Q9H7C9-1"/>
    <property type="nucleotide sequence ID" value="NM_001392035.1"/>
</dbReference>
<dbReference type="RefSeq" id="NP_001378965.1">
    <molecule id="Q9H7C9-1"/>
    <property type="nucleotide sequence ID" value="NM_001392036.1"/>
</dbReference>
<dbReference type="RefSeq" id="NP_001378966.1">
    <molecule id="Q9H7C9-1"/>
    <property type="nucleotide sequence ID" value="NM_001392037.1"/>
</dbReference>
<dbReference type="RefSeq" id="NP_001378967.1">
    <molecule id="Q9H7C9-1"/>
    <property type="nucleotide sequence ID" value="NM_001392038.1"/>
</dbReference>
<dbReference type="RefSeq" id="NP_078960.1">
    <molecule id="Q9H7C9-1"/>
    <property type="nucleotide sequence ID" value="NM_024684.4"/>
</dbReference>
<dbReference type="RefSeq" id="XP_011543271.1">
    <property type="nucleotide sequence ID" value="XM_011544969.2"/>
</dbReference>
<dbReference type="PDB" id="2AB1">
    <property type="method" value="X-ray"/>
    <property type="resolution" value="2.59 A"/>
    <property type="chains" value="A/B=2-122"/>
</dbReference>
<dbReference type="PDB" id="2Q4Q">
    <property type="method" value="X-ray"/>
    <property type="resolution" value="2.59 A"/>
    <property type="chains" value="A/B=2-122"/>
</dbReference>
<dbReference type="PDBsum" id="2AB1"/>
<dbReference type="PDBsum" id="2Q4Q"/>
<dbReference type="SMR" id="Q9H7C9"/>
<dbReference type="BioGRID" id="118795">
    <property type="interactions" value="41"/>
</dbReference>
<dbReference type="FunCoup" id="Q9H7C9">
    <property type="interactions" value="508"/>
</dbReference>
<dbReference type="IntAct" id="Q9H7C9">
    <property type="interactions" value="13"/>
</dbReference>
<dbReference type="MINT" id="Q9H7C9"/>
<dbReference type="STRING" id="9606.ENSP00000307254"/>
<dbReference type="GlyGen" id="Q9H7C9">
    <property type="glycosylation" value="1 site, 1 O-linked glycan (1 site)"/>
</dbReference>
<dbReference type="iPTMnet" id="Q9H7C9"/>
<dbReference type="PhosphoSitePlus" id="Q9H7C9"/>
<dbReference type="BioMuta" id="AAMDC"/>
<dbReference type="DMDM" id="74733628"/>
<dbReference type="jPOST" id="Q9H7C9"/>
<dbReference type="MassIVE" id="Q9H7C9"/>
<dbReference type="PaxDb" id="9606-ENSP00000431808"/>
<dbReference type="PeptideAtlas" id="Q9H7C9"/>
<dbReference type="ProteomicsDB" id="81102">
    <molecule id="Q9H7C9-1"/>
</dbReference>
<dbReference type="ProteomicsDB" id="81103">
    <molecule id="Q9H7C9-2"/>
</dbReference>
<dbReference type="ProteomicsDB" id="81104">
    <molecule id="Q9H7C9-3"/>
</dbReference>
<dbReference type="Pumba" id="Q9H7C9"/>
<dbReference type="Antibodypedia" id="31275">
    <property type="antibodies" value="172 antibodies from 18 providers"/>
</dbReference>
<dbReference type="DNASU" id="28971"/>
<dbReference type="Ensembl" id="ENST00000393427.7">
    <molecule id="Q9H7C9-1"/>
    <property type="protein sequence ID" value="ENSP00000377078.2"/>
    <property type="gene ID" value="ENSG00000087884.16"/>
</dbReference>
<dbReference type="Ensembl" id="ENST00000525034.1">
    <molecule id="Q9H7C9-1"/>
    <property type="protein sequence ID" value="ENSP00000432830.2"/>
    <property type="gene ID" value="ENSG00000087884.16"/>
</dbReference>
<dbReference type="Ensembl" id="ENST00000526415.5">
    <molecule id="Q9H7C9-1"/>
    <property type="protein sequence ID" value="ENSP00000431808.1"/>
    <property type="gene ID" value="ENSG00000087884.16"/>
</dbReference>
<dbReference type="Ensembl" id="ENST00000532481.5">
    <molecule id="Q9H7C9-3"/>
    <property type="protein sequence ID" value="ENSP00000433293.1"/>
    <property type="gene ID" value="ENSG00000087884.16"/>
</dbReference>
<dbReference type="GeneID" id="28971"/>
<dbReference type="KEGG" id="hsa:28971"/>
<dbReference type="MANE-Select" id="ENST00000393427.7">
    <property type="protein sequence ID" value="ENSP00000377078.2"/>
    <property type="RefSeq nucleotide sequence ID" value="NM_024684.4"/>
    <property type="RefSeq protein sequence ID" value="NP_078960.1"/>
</dbReference>
<dbReference type="UCSC" id="uc001oyp.4">
    <molecule id="Q9H7C9-1"/>
    <property type="organism name" value="human"/>
</dbReference>
<dbReference type="AGR" id="HGNC:30205"/>
<dbReference type="CTD" id="28971"/>
<dbReference type="DisGeNET" id="28971"/>
<dbReference type="GeneCards" id="AAMDC"/>
<dbReference type="HGNC" id="HGNC:30205">
    <property type="gene designation" value="AAMDC"/>
</dbReference>
<dbReference type="HPA" id="ENSG00000087884">
    <property type="expression patterns" value="Tissue enhanced (skeletal)"/>
</dbReference>
<dbReference type="MIM" id="620474">
    <property type="type" value="gene"/>
</dbReference>
<dbReference type="neXtProt" id="NX_Q9H7C9"/>
<dbReference type="OpenTargets" id="ENSG00000087884"/>
<dbReference type="PharmGKB" id="PA144596486"/>
<dbReference type="VEuPathDB" id="HostDB:ENSG00000087884"/>
<dbReference type="eggNOG" id="ENOG502S00Z">
    <property type="taxonomic scope" value="Eukaryota"/>
</dbReference>
<dbReference type="GeneTree" id="ENSGT00390000011958"/>
<dbReference type="HOGENOM" id="CLU_074390_4_0_1"/>
<dbReference type="InParanoid" id="Q9H7C9"/>
<dbReference type="OrthoDB" id="413520at2759"/>
<dbReference type="PAN-GO" id="Q9H7C9">
    <property type="GO annotations" value="2 GO annotations based on evolutionary models"/>
</dbReference>
<dbReference type="PhylomeDB" id="Q9H7C9"/>
<dbReference type="TreeFam" id="TF332083"/>
<dbReference type="PathwayCommons" id="Q9H7C9"/>
<dbReference type="SignaLink" id="Q9H7C9"/>
<dbReference type="BioGRID-ORCS" id="28971">
    <property type="hits" value="16 hits in 1156 CRISPR screens"/>
</dbReference>
<dbReference type="ChiTaRS" id="AAMDC">
    <property type="organism name" value="human"/>
</dbReference>
<dbReference type="EvolutionaryTrace" id="Q9H7C9"/>
<dbReference type="GenomeRNAi" id="28971"/>
<dbReference type="Pharos" id="Q9H7C9">
    <property type="development level" value="Tbio"/>
</dbReference>
<dbReference type="PRO" id="PR:Q9H7C9"/>
<dbReference type="Proteomes" id="UP000005640">
    <property type="component" value="Chromosome 11"/>
</dbReference>
<dbReference type="RNAct" id="Q9H7C9">
    <property type="molecule type" value="protein"/>
</dbReference>
<dbReference type="Bgee" id="ENSG00000087884">
    <property type="expression patterns" value="Expressed in tendon of biceps brachii and 203 other cell types or tissues"/>
</dbReference>
<dbReference type="ExpressionAtlas" id="Q9H7C9">
    <property type="expression patterns" value="baseline and differential"/>
</dbReference>
<dbReference type="GO" id="GO:0005737">
    <property type="term" value="C:cytoplasm"/>
    <property type="evidence" value="ECO:0000250"/>
    <property type="project" value="UniProtKB"/>
</dbReference>
<dbReference type="GO" id="GO:0043066">
    <property type="term" value="P:negative regulation of apoptotic process"/>
    <property type="evidence" value="ECO:0007669"/>
    <property type="project" value="Ensembl"/>
</dbReference>
<dbReference type="GO" id="GO:0045600">
    <property type="term" value="P:positive regulation of fat cell differentiation"/>
    <property type="evidence" value="ECO:0000318"/>
    <property type="project" value="GO_Central"/>
</dbReference>
<dbReference type="GO" id="GO:0045944">
    <property type="term" value="P:positive regulation of transcription by RNA polymerase II"/>
    <property type="evidence" value="ECO:0007669"/>
    <property type="project" value="Ensembl"/>
</dbReference>
<dbReference type="GO" id="GO:0006366">
    <property type="term" value="P:transcription by RNA polymerase II"/>
    <property type="evidence" value="ECO:0007669"/>
    <property type="project" value="Ensembl"/>
</dbReference>
<dbReference type="CDD" id="cd05126">
    <property type="entry name" value="Mth938"/>
    <property type="match status" value="1"/>
</dbReference>
<dbReference type="FunFam" id="3.40.1230.10:FF:000001">
    <property type="entry name" value="Adipogenesis-associated, Mth938 domain-containing"/>
    <property type="match status" value="1"/>
</dbReference>
<dbReference type="Gene3D" id="3.40.1230.10">
    <property type="entry name" value="MTH938-like"/>
    <property type="match status" value="1"/>
</dbReference>
<dbReference type="InterPro" id="IPR034096">
    <property type="entry name" value="AAMDC"/>
</dbReference>
<dbReference type="InterPro" id="IPR036748">
    <property type="entry name" value="MTH938-like_sf"/>
</dbReference>
<dbReference type="InterPro" id="IPR007523">
    <property type="entry name" value="NDUFAF3/AAMDC"/>
</dbReference>
<dbReference type="PANTHER" id="PTHR15811">
    <property type="entry name" value="MTH938 DOMAIN-CONTAINING PROTEIN"/>
    <property type="match status" value="1"/>
</dbReference>
<dbReference type="PANTHER" id="PTHR15811:SF5">
    <property type="entry name" value="MTH938 DOMAIN-CONTAINING PROTEIN"/>
    <property type="match status" value="1"/>
</dbReference>
<dbReference type="Pfam" id="PF04430">
    <property type="entry name" value="DUF498"/>
    <property type="match status" value="1"/>
</dbReference>
<dbReference type="SUPFAM" id="SSF64076">
    <property type="entry name" value="MTH938-like"/>
    <property type="match status" value="1"/>
</dbReference>
<organism>
    <name type="scientific">Homo sapiens</name>
    <name type="common">Human</name>
    <dbReference type="NCBI Taxonomy" id="9606"/>
    <lineage>
        <taxon>Eukaryota</taxon>
        <taxon>Metazoa</taxon>
        <taxon>Chordata</taxon>
        <taxon>Craniata</taxon>
        <taxon>Vertebrata</taxon>
        <taxon>Euteleostomi</taxon>
        <taxon>Mammalia</taxon>
        <taxon>Eutheria</taxon>
        <taxon>Euarchontoglires</taxon>
        <taxon>Primates</taxon>
        <taxon>Haplorrhini</taxon>
        <taxon>Catarrhini</taxon>
        <taxon>Hominidae</taxon>
        <taxon>Homo</taxon>
    </lineage>
</organism>
<evidence type="ECO:0000250" key="1"/>
<evidence type="ECO:0000303" key="2">
    <source>
    </source>
</evidence>
<evidence type="ECO:0000303" key="3">
    <source ref="1"/>
</evidence>
<evidence type="ECO:0000305" key="4"/>
<evidence type="ECO:0007829" key="5">
    <source>
        <dbReference type="PDB" id="2AB1"/>
    </source>
</evidence>
<keyword id="KW-0002">3D-structure</keyword>
<keyword id="KW-0025">Alternative splicing</keyword>
<keyword id="KW-0963">Cytoplasm</keyword>
<keyword id="KW-1267">Proteomics identification</keyword>
<keyword id="KW-1185">Reference proteome</keyword>
<comment type="function">
    <text evidence="1">May play a role in preadipocyte differentiation and adipogenesis.</text>
</comment>
<comment type="interaction">
    <interactant intactId="EBI-10308705">
        <id>Q9H7C9</id>
    </interactant>
    <interactant intactId="EBI-3916242">
        <id>Q96HD9</id>
        <label>ACY3</label>
    </interactant>
    <organismsDiffer>false</organismsDiffer>
    <experiments>3</experiments>
</comment>
<comment type="interaction">
    <interactant intactId="EBI-10308705">
        <id>Q9H7C9</id>
    </interactant>
    <interactant intactId="EBI-17264467">
        <id>P05067-2</id>
        <label>APP</label>
    </interactant>
    <organismsDiffer>false</organismsDiffer>
    <experiments>3</experiments>
</comment>
<comment type="interaction">
    <interactant intactId="EBI-10308705">
        <id>Q9H7C9</id>
    </interactant>
    <interactant intactId="EBI-946046">
        <id>P54252</id>
        <label>ATXN3</label>
    </interactant>
    <organismsDiffer>false</organismsDiffer>
    <experiments>3</experiments>
</comment>
<comment type="interaction">
    <interactant intactId="EBI-10308705">
        <id>Q9H7C9</id>
    </interactant>
    <interactant intactId="EBI-10968534">
        <id>P50570-2</id>
        <label>DNM2</label>
    </interactant>
    <organismsDiffer>false</organismsDiffer>
    <experiments>3</experiments>
</comment>
<comment type="interaction">
    <interactant intactId="EBI-10308705">
        <id>Q9H7C9</id>
    </interactant>
    <interactant intactId="EBI-11110431">
        <id>Q8TB36</id>
        <label>GDAP1</label>
    </interactant>
    <organismsDiffer>false</organismsDiffer>
    <experiments>3</experiments>
</comment>
<comment type="interaction">
    <interactant intactId="EBI-10308705">
        <id>Q9H7C9</id>
    </interactant>
    <interactant intactId="EBI-739467">
        <id>Q9H8Y8</id>
        <label>GORASP2</label>
    </interactant>
    <organismsDiffer>false</organismsDiffer>
    <experiments>3</experiments>
</comment>
<comment type="interaction">
    <interactant intactId="EBI-10308705">
        <id>Q9H7C9</id>
    </interactant>
    <interactant intactId="EBI-466029">
        <id>P42858</id>
        <label>HTT</label>
    </interactant>
    <organismsDiffer>false</organismsDiffer>
    <experiments>3</experiments>
</comment>
<comment type="interaction">
    <interactant intactId="EBI-10308705">
        <id>Q9H7C9</id>
    </interactant>
    <interactant intactId="EBI-9031083">
        <id>Q9Y2B5</id>
        <label>VPS9D1</label>
    </interactant>
    <organismsDiffer>false</organismsDiffer>
    <experiments>3</experiments>
</comment>
<comment type="subcellular location">
    <subcellularLocation>
        <location evidence="1">Cytoplasm</location>
    </subcellularLocation>
    <text evidence="1">Diffuse distribution with some highly concentrated spots around the nucleus.</text>
</comment>
<comment type="alternative products">
    <event type="alternative splicing"/>
    <isoform>
        <id>Q9H7C9-1</id>
        <name>1</name>
        <sequence type="displayed"/>
    </isoform>
    <isoform>
        <id>Q9H7C9-2</id>
        <name>2</name>
        <sequence type="described" ref="VSP_019267 VSP_019269"/>
    </isoform>
    <isoform>
        <id>Q9H7C9-3</id>
        <name>3</name>
        <sequence type="described" ref="VSP_019266 VSP_019268"/>
    </isoform>
</comment>
<comment type="similarity">
    <text evidence="4">Belongs to the AAMDC family.</text>
</comment>
<gene>
    <name type="primary">AAMDC</name>
    <name type="synonym">C11orf67</name>
    <name type="ORF">PTD015</name>
</gene>
<protein>
    <recommendedName>
        <fullName>Mth938 domain-containing protein</fullName>
    </recommendedName>
    <alternativeName>
        <fullName>Adipogenesis associated Mth938 domain-containing protein</fullName>
    </alternativeName>
</protein>
<accession>Q9H7C9</accession>
<accession>Q96AQ4</accession>
<accession>Q9Y6B1</accession>
<feature type="chain" id="PRO_0000239814" description="Mth938 domain-containing protein">
    <location>
        <begin position="1"/>
        <end position="122"/>
    </location>
</feature>
<feature type="region of interest" description="MTH138-like domain" evidence="1">
    <location>
        <begin position="6"/>
        <end position="122"/>
    </location>
</feature>
<feature type="splice variant" id="VSP_019267" description="In isoform 2." evidence="3">
    <original>VPSSTVEYLKKHGIDVRVLQTEQAVKEYNALVAQGVRVGGVF</original>
    <variation>APTQQLPSGVHVRAGVQFHLLQLHGTSFERCKTGAGLTSNML</variation>
    <location>
        <begin position="77"/>
        <end position="118"/>
    </location>
</feature>
<feature type="splice variant" id="VSP_019266" description="In isoform 3." evidence="2">
    <original>VPSSTVEYLKKH</original>
    <variation>DGIQGAQLDLNC</variation>
    <location>
        <begin position="77"/>
        <end position="88"/>
    </location>
</feature>
<feature type="splice variant" id="VSP_019268" description="In isoform 3." evidence="2">
    <location>
        <begin position="89"/>
        <end position="122"/>
    </location>
</feature>
<feature type="splice variant" id="VSP_019269" description="In isoform 2." evidence="3">
    <location>
        <begin position="119"/>
        <end position="122"/>
    </location>
</feature>
<feature type="sequence variant" id="VAR_052696" description="In dbSNP:rs2186564.">
    <original>V</original>
    <variation>M</variation>
    <location>
        <position position="92"/>
    </location>
</feature>
<feature type="strand" evidence="5">
    <location>
        <begin position="6"/>
        <end position="10"/>
    </location>
</feature>
<feature type="strand" evidence="5">
    <location>
        <begin position="13"/>
        <end position="16"/>
    </location>
</feature>
<feature type="strand" evidence="5">
    <location>
        <begin position="22"/>
        <end position="29"/>
    </location>
</feature>
<feature type="strand" evidence="5">
    <location>
        <begin position="32"/>
        <end position="36"/>
    </location>
</feature>
<feature type="helix" evidence="5">
    <location>
        <begin position="38"/>
        <end position="41"/>
    </location>
</feature>
<feature type="strand" evidence="5">
    <location>
        <begin position="45"/>
        <end position="47"/>
    </location>
</feature>
<feature type="helix" evidence="5">
    <location>
        <begin position="51"/>
        <end position="58"/>
    </location>
</feature>
<feature type="strand" evidence="5">
    <location>
        <begin position="63"/>
        <end position="69"/>
    </location>
</feature>
<feature type="helix" evidence="5">
    <location>
        <begin position="79"/>
        <end position="87"/>
    </location>
</feature>
<feature type="strand" evidence="5">
    <location>
        <begin position="91"/>
        <end position="95"/>
    </location>
</feature>
<feature type="helix" evidence="5">
    <location>
        <begin position="97"/>
        <end position="109"/>
    </location>
</feature>
<feature type="strand" evidence="5">
    <location>
        <begin position="114"/>
        <end position="119"/>
    </location>
</feature>
<sequence>MTSPEIASLSWGQMKVKGSNTTYKDCKVWPGGSRTWDWRETGTEHSPGVQPADVKEVVEKGVQTLVIGRGMSEALKVPSSTVEYLKKHGIDVRVLQTEQAVKEYNALVAQGVRVGGVFHSTC</sequence>
<name>AAMDC_HUMAN</name>
<proteinExistence type="evidence at protein level"/>
<reference key="1">
    <citation type="submission" date="1998-09" db="EMBL/GenBank/DDBJ databases">
        <authorList>
            <person name="Mao M."/>
            <person name="Peng Y."/>
            <person name="Dai M."/>
            <person name="Song H."/>
            <person name="Mao Y."/>
            <person name="Zhang Q."/>
            <person name="Huang Q."/>
            <person name="Fu G."/>
            <person name="Luo M."/>
            <person name="Chen J."/>
            <person name="Hu R."/>
        </authorList>
    </citation>
    <scope>NUCLEOTIDE SEQUENCE [LARGE SCALE MRNA] (ISOFORM 2)</scope>
    <source>
        <tissue>Pituitary tumor</tissue>
    </source>
</reference>
<reference key="2">
    <citation type="journal article" date="2004" name="Nat. Genet.">
        <title>Complete sequencing and characterization of 21,243 full-length human cDNAs.</title>
        <authorList>
            <person name="Ota T."/>
            <person name="Suzuki Y."/>
            <person name="Nishikawa T."/>
            <person name="Otsuki T."/>
            <person name="Sugiyama T."/>
            <person name="Irie R."/>
            <person name="Wakamatsu A."/>
            <person name="Hayashi K."/>
            <person name="Sato H."/>
            <person name="Nagai K."/>
            <person name="Kimura K."/>
            <person name="Makita H."/>
            <person name="Sekine M."/>
            <person name="Obayashi M."/>
            <person name="Nishi T."/>
            <person name="Shibahara T."/>
            <person name="Tanaka T."/>
            <person name="Ishii S."/>
            <person name="Yamamoto J."/>
            <person name="Saito K."/>
            <person name="Kawai Y."/>
            <person name="Isono Y."/>
            <person name="Nakamura Y."/>
            <person name="Nagahari K."/>
            <person name="Murakami K."/>
            <person name="Yasuda T."/>
            <person name="Iwayanagi T."/>
            <person name="Wagatsuma M."/>
            <person name="Shiratori A."/>
            <person name="Sudo H."/>
            <person name="Hosoiri T."/>
            <person name="Kaku Y."/>
            <person name="Kodaira H."/>
            <person name="Kondo H."/>
            <person name="Sugawara M."/>
            <person name="Takahashi M."/>
            <person name="Kanda K."/>
            <person name="Yokoi T."/>
            <person name="Furuya T."/>
            <person name="Kikkawa E."/>
            <person name="Omura Y."/>
            <person name="Abe K."/>
            <person name="Kamihara K."/>
            <person name="Katsuta N."/>
            <person name="Sato K."/>
            <person name="Tanikawa M."/>
            <person name="Yamazaki M."/>
            <person name="Ninomiya K."/>
            <person name="Ishibashi T."/>
            <person name="Yamashita H."/>
            <person name="Murakawa K."/>
            <person name="Fujimori K."/>
            <person name="Tanai H."/>
            <person name="Kimata M."/>
            <person name="Watanabe M."/>
            <person name="Hiraoka S."/>
            <person name="Chiba Y."/>
            <person name="Ishida S."/>
            <person name="Ono Y."/>
            <person name="Takiguchi S."/>
            <person name="Watanabe S."/>
            <person name="Yosida M."/>
            <person name="Hotuta T."/>
            <person name="Kusano J."/>
            <person name="Kanehori K."/>
            <person name="Takahashi-Fujii A."/>
            <person name="Hara H."/>
            <person name="Tanase T.-O."/>
            <person name="Nomura Y."/>
            <person name="Togiya S."/>
            <person name="Komai F."/>
            <person name="Hara R."/>
            <person name="Takeuchi K."/>
            <person name="Arita M."/>
            <person name="Imose N."/>
            <person name="Musashino K."/>
            <person name="Yuuki H."/>
            <person name="Oshima A."/>
            <person name="Sasaki N."/>
            <person name="Aotsuka S."/>
            <person name="Yoshikawa Y."/>
            <person name="Matsunawa H."/>
            <person name="Ichihara T."/>
            <person name="Shiohata N."/>
            <person name="Sano S."/>
            <person name="Moriya S."/>
            <person name="Momiyama H."/>
            <person name="Satoh N."/>
            <person name="Takami S."/>
            <person name="Terashima Y."/>
            <person name="Suzuki O."/>
            <person name="Nakagawa S."/>
            <person name="Senoh A."/>
            <person name="Mizoguchi H."/>
            <person name="Goto Y."/>
            <person name="Shimizu F."/>
            <person name="Wakebe H."/>
            <person name="Hishigaki H."/>
            <person name="Watanabe T."/>
            <person name="Sugiyama A."/>
            <person name="Takemoto M."/>
            <person name="Kawakami B."/>
            <person name="Yamazaki M."/>
            <person name="Watanabe K."/>
            <person name="Kumagai A."/>
            <person name="Itakura S."/>
            <person name="Fukuzumi Y."/>
            <person name="Fujimori Y."/>
            <person name="Komiyama M."/>
            <person name="Tashiro H."/>
            <person name="Tanigami A."/>
            <person name="Fujiwara T."/>
            <person name="Ono T."/>
            <person name="Yamada K."/>
            <person name="Fujii Y."/>
            <person name="Ozaki K."/>
            <person name="Hirao M."/>
            <person name="Ohmori Y."/>
            <person name="Kawabata A."/>
            <person name="Hikiji T."/>
            <person name="Kobatake N."/>
            <person name="Inagaki H."/>
            <person name="Ikema Y."/>
            <person name="Okamoto S."/>
            <person name="Okitani R."/>
            <person name="Kawakami T."/>
            <person name="Noguchi S."/>
            <person name="Itoh T."/>
            <person name="Shigeta K."/>
            <person name="Senba T."/>
            <person name="Matsumura K."/>
            <person name="Nakajima Y."/>
            <person name="Mizuno T."/>
            <person name="Morinaga M."/>
            <person name="Sasaki M."/>
            <person name="Togashi T."/>
            <person name="Oyama M."/>
            <person name="Hata H."/>
            <person name="Watanabe M."/>
            <person name="Komatsu T."/>
            <person name="Mizushima-Sugano J."/>
            <person name="Satoh T."/>
            <person name="Shirai Y."/>
            <person name="Takahashi Y."/>
            <person name="Nakagawa K."/>
            <person name="Okumura K."/>
            <person name="Nagase T."/>
            <person name="Nomura N."/>
            <person name="Kikuchi H."/>
            <person name="Masuho Y."/>
            <person name="Yamashita R."/>
            <person name="Nakai K."/>
            <person name="Yada T."/>
            <person name="Nakamura Y."/>
            <person name="Ohara O."/>
            <person name="Isogai T."/>
            <person name="Sugano S."/>
        </authorList>
    </citation>
    <scope>NUCLEOTIDE SEQUENCE [LARGE SCALE MRNA] (ISOFORM 1)</scope>
</reference>
<reference key="3">
    <citation type="submission" date="2004-06" db="EMBL/GenBank/DDBJ databases">
        <title>Cloning of human full open reading frames in Gateway(TM) system entry vector (pDONR201).</title>
        <authorList>
            <person name="Ebert L."/>
            <person name="Schick M."/>
            <person name="Neubert P."/>
            <person name="Schatten R."/>
            <person name="Henze S."/>
            <person name="Korn B."/>
        </authorList>
    </citation>
    <scope>NUCLEOTIDE SEQUENCE [LARGE SCALE MRNA] (ISOFORM 1)</scope>
</reference>
<reference key="4">
    <citation type="journal article" date="2006" name="Nature">
        <title>Human chromosome 11 DNA sequence and analysis including novel gene identification.</title>
        <authorList>
            <person name="Taylor T.D."/>
            <person name="Noguchi H."/>
            <person name="Totoki Y."/>
            <person name="Toyoda A."/>
            <person name="Kuroki Y."/>
            <person name="Dewar K."/>
            <person name="Lloyd C."/>
            <person name="Itoh T."/>
            <person name="Takeda T."/>
            <person name="Kim D.-W."/>
            <person name="She X."/>
            <person name="Barlow K.F."/>
            <person name="Bloom T."/>
            <person name="Bruford E."/>
            <person name="Chang J.L."/>
            <person name="Cuomo C.A."/>
            <person name="Eichler E."/>
            <person name="FitzGerald M.G."/>
            <person name="Jaffe D.B."/>
            <person name="LaButti K."/>
            <person name="Nicol R."/>
            <person name="Park H.-S."/>
            <person name="Seaman C."/>
            <person name="Sougnez C."/>
            <person name="Yang X."/>
            <person name="Zimmer A.R."/>
            <person name="Zody M.C."/>
            <person name="Birren B.W."/>
            <person name="Nusbaum C."/>
            <person name="Fujiyama A."/>
            <person name="Hattori M."/>
            <person name="Rogers J."/>
            <person name="Lander E.S."/>
            <person name="Sakaki Y."/>
        </authorList>
    </citation>
    <scope>NUCLEOTIDE SEQUENCE [LARGE SCALE GENOMIC DNA]</scope>
</reference>
<reference key="5">
    <citation type="journal article" date="2004" name="Genome Res.">
        <title>The status, quality, and expansion of the NIH full-length cDNA project: the Mammalian Gene Collection (MGC).</title>
        <authorList>
            <consortium name="The MGC Project Team"/>
        </authorList>
    </citation>
    <scope>NUCLEOTIDE SEQUENCE [LARGE SCALE MRNA] (ISOFORMS 1 AND 3)</scope>
    <source>
        <tissue>Brain</tissue>
        <tissue>Ovary</tissue>
    </source>
</reference>
<reference key="6">
    <citation type="journal article" date="2011" name="BMC Syst. Biol.">
        <title>Initial characterization of the human central proteome.</title>
        <authorList>
            <person name="Burkard T.R."/>
            <person name="Planyavsky M."/>
            <person name="Kaupe I."/>
            <person name="Breitwieser F.P."/>
            <person name="Buerckstuemmer T."/>
            <person name="Bennett K.L."/>
            <person name="Superti-Furga G."/>
            <person name="Colinge J."/>
        </authorList>
    </citation>
    <scope>IDENTIFICATION BY MASS SPECTROMETRY [LARGE SCALE ANALYSIS]</scope>
</reference>
<reference key="7">
    <citation type="submission" date="2005-07" db="PDB data bank">
        <title>X-ray structure of gene product from Homo sapiens HS.95870.</title>
        <authorList>
            <consortium name="Center for eukaryotic structural genomics (CESG)"/>
        </authorList>
    </citation>
    <scope>X-RAY CRYSTALLOGRAPHY (2.59 ANGSTROMS)</scope>
</reference>
<reference key="8">
    <citation type="journal article" date="2007" name="Structure">
        <title>Ensemble refinement of protein crystal structures: validation and application.</title>
        <authorList>
            <person name="Levin E.J."/>
            <person name="Kondrashov D.A."/>
            <person name="Wesenberg G.E."/>
            <person name="Phillips G.N. Jr."/>
        </authorList>
    </citation>
    <scope>X-RAY CRYSTALLOGRAPHY (2.59 ANGSTROMS)</scope>
</reference>